<reference key="1">
    <citation type="submission" date="2005-03" db="EMBL/GenBank/DDBJ databases">
        <title>Brevibacillus brevis strain 47, complete genome.</title>
        <authorList>
            <person name="Hosoyama A."/>
            <person name="Yamada R."/>
            <person name="Hongo Y."/>
            <person name="Terui Y."/>
            <person name="Ankai A."/>
            <person name="Masuyama W."/>
            <person name="Sekiguchi M."/>
            <person name="Takeda T."/>
            <person name="Asano K."/>
            <person name="Ohji S."/>
            <person name="Ichikawa N."/>
            <person name="Narita S."/>
            <person name="Aoki N."/>
            <person name="Miura H."/>
            <person name="Matsushita S."/>
            <person name="Sekigawa T."/>
            <person name="Yamagata H."/>
            <person name="Yoshikawa H."/>
            <person name="Udaka S."/>
            <person name="Tanikawa S."/>
            <person name="Fujita N."/>
        </authorList>
    </citation>
    <scope>NUCLEOTIDE SEQUENCE [LARGE SCALE GENOMIC DNA]</scope>
    <source>
        <strain>47 / JCM 6285 / NBRC 100599</strain>
    </source>
</reference>
<dbReference type="EMBL" id="AP008955">
    <property type="protein sequence ID" value="BAH44283.1"/>
    <property type="molecule type" value="Genomic_DNA"/>
</dbReference>
<dbReference type="RefSeq" id="WP_007718933.1">
    <property type="nucleotide sequence ID" value="NC_012491.1"/>
</dbReference>
<dbReference type="SMR" id="C0ZES4"/>
<dbReference type="STRING" id="358681.BBR47_33060"/>
<dbReference type="KEGG" id="bbe:BBR47_33060"/>
<dbReference type="eggNOG" id="COG4224">
    <property type="taxonomic scope" value="Bacteria"/>
</dbReference>
<dbReference type="HOGENOM" id="CLU_173137_3_2_9"/>
<dbReference type="Proteomes" id="UP000001877">
    <property type="component" value="Chromosome"/>
</dbReference>
<dbReference type="GO" id="GO:0005737">
    <property type="term" value="C:cytoplasm"/>
    <property type="evidence" value="ECO:0007669"/>
    <property type="project" value="UniProtKB-SubCell"/>
</dbReference>
<dbReference type="Gene3D" id="1.10.287.540">
    <property type="entry name" value="Helix hairpin bin"/>
    <property type="match status" value="1"/>
</dbReference>
<dbReference type="HAMAP" id="MF_01103">
    <property type="entry name" value="UPF0291"/>
    <property type="match status" value="1"/>
</dbReference>
<dbReference type="InterPro" id="IPR009242">
    <property type="entry name" value="DUF896"/>
</dbReference>
<dbReference type="PANTHER" id="PTHR37300">
    <property type="entry name" value="UPF0291 PROTEIN CBO2609/CLC_2481"/>
    <property type="match status" value="1"/>
</dbReference>
<dbReference type="PANTHER" id="PTHR37300:SF1">
    <property type="entry name" value="UPF0291 PROTEIN YNZC"/>
    <property type="match status" value="1"/>
</dbReference>
<dbReference type="Pfam" id="PF05979">
    <property type="entry name" value="DUF896"/>
    <property type="match status" value="1"/>
</dbReference>
<dbReference type="SUPFAM" id="SSF158221">
    <property type="entry name" value="YnzC-like"/>
    <property type="match status" value="1"/>
</dbReference>
<comment type="subcellular location">
    <subcellularLocation>
        <location evidence="1">Cytoplasm</location>
    </subcellularLocation>
</comment>
<comment type="similarity">
    <text evidence="1">Belongs to the UPF0291 family.</text>
</comment>
<accession>C0ZES4</accession>
<protein>
    <recommendedName>
        <fullName evidence="1">UPF0291 protein BBR47_33060</fullName>
    </recommendedName>
</protein>
<organism>
    <name type="scientific">Brevibacillus brevis (strain 47 / JCM 6285 / NBRC 100599)</name>
    <dbReference type="NCBI Taxonomy" id="358681"/>
    <lineage>
        <taxon>Bacteria</taxon>
        <taxon>Bacillati</taxon>
        <taxon>Bacillota</taxon>
        <taxon>Bacilli</taxon>
        <taxon>Bacillales</taxon>
        <taxon>Paenibacillaceae</taxon>
        <taxon>Brevibacillus</taxon>
    </lineage>
</organism>
<sequence>MVSDAEIKRINELVKKSREEGLTEEEKLEQKALRQKYIDAVKLSLRANLDSIRYVEDLEENKPKQ</sequence>
<gene>
    <name type="ordered locus">BBR47_33060</name>
</gene>
<feature type="chain" id="PRO_1000180971" description="UPF0291 protein BBR47_33060">
    <location>
        <begin position="1"/>
        <end position="65"/>
    </location>
</feature>
<name>Y3306_BREBN</name>
<proteinExistence type="inferred from homology"/>
<evidence type="ECO:0000255" key="1">
    <source>
        <dbReference type="HAMAP-Rule" id="MF_01103"/>
    </source>
</evidence>
<keyword id="KW-0963">Cytoplasm</keyword>
<keyword id="KW-1185">Reference proteome</keyword>